<reference key="1">
    <citation type="journal article" date="2001" name="J. Biol. Chem.">
        <title>GRIM-19, a cell death regulatory gene product, is a subunit of bovine mitochondrial NADH:ubiquinone oxidoreductase (complex I).</title>
        <authorList>
            <person name="Fearnley I.M."/>
            <person name="Carroll J."/>
            <person name="Shannon R.J."/>
            <person name="Runswick M.J."/>
            <person name="Walker J.E."/>
            <person name="Hirst J."/>
        </authorList>
    </citation>
    <scope>NUCLEOTIDE SEQUENCE [MRNA]</scope>
    <scope>PARTIAL PROTEIN SEQUENCE</scope>
    <scope>ACETYLATION AT ALA-2</scope>
    <scope>MASS SPECTROMETRY</scope>
    <source>
        <tissue>Heart</tissue>
    </source>
</reference>
<reference key="2">
    <citation type="submission" date="2005-08" db="EMBL/GenBank/DDBJ databases">
        <authorList>
            <consortium name="NIH - Mammalian Gene Collection (MGC) project"/>
        </authorList>
    </citation>
    <scope>NUCLEOTIDE SEQUENCE [LARGE SCALE MRNA]</scope>
    <source>
        <strain>Crossbred X Angus</strain>
        <tissue>Ileum</tissue>
    </source>
</reference>
<reference key="3">
    <citation type="journal article" date="2008" name="Anal. Biochem.">
        <title>Subunit analysis of bovine heart complex I by reversed-phase high-performance liquid chromatography, electrospray ionization-tandem mass spectrometry, and matrix-assisted laser desorption/ionization-time-of-flight mass spectrometry.</title>
        <authorList>
            <person name="Lemma-Gray P."/>
            <person name="Valusova E."/>
            <person name="Carroll C.A."/>
            <person name="Weintraub S.T."/>
            <person name="Musatov A."/>
            <person name="Robinson N.C."/>
        </authorList>
    </citation>
    <scope>SUBUNIT</scope>
    <scope>IDENTIFICATION IN COMPLEX I</scope>
    <scope>SUBCELLULAR LOCATION</scope>
</reference>
<dbReference type="EMBL" id="AJ316011">
    <property type="protein sequence ID" value="CAC87049.1"/>
    <property type="molecule type" value="mRNA"/>
</dbReference>
<dbReference type="EMBL" id="BC102406">
    <property type="protein sequence ID" value="AAI02407.1"/>
    <property type="molecule type" value="mRNA"/>
</dbReference>
<dbReference type="RefSeq" id="NP_788845.1">
    <property type="nucleotide sequence ID" value="NM_176672.2"/>
</dbReference>
<dbReference type="PDB" id="5LC5">
    <property type="method" value="EM"/>
    <property type="resolution" value="4.35 A"/>
    <property type="chains" value="Z=32-100"/>
</dbReference>
<dbReference type="PDB" id="5LDW">
    <property type="method" value="EM"/>
    <property type="resolution" value="4.27 A"/>
    <property type="chains" value="Z=32-100"/>
</dbReference>
<dbReference type="PDB" id="5LDX">
    <property type="method" value="EM"/>
    <property type="resolution" value="5.60 A"/>
    <property type="chains" value="Z=32-100"/>
</dbReference>
<dbReference type="PDB" id="5LNK">
    <property type="method" value="EM"/>
    <property type="resolution" value="3.90 A"/>
    <property type="chains" value="q=2-144"/>
</dbReference>
<dbReference type="PDB" id="5O31">
    <property type="method" value="EM"/>
    <property type="resolution" value="4.13 A"/>
    <property type="chains" value="Z=1-99"/>
</dbReference>
<dbReference type="PDB" id="7DGQ">
    <property type="method" value="EM"/>
    <property type="resolution" value="5.00 A"/>
    <property type="chains" value="V=2-144"/>
</dbReference>
<dbReference type="PDB" id="7DGR">
    <property type="method" value="EM"/>
    <property type="resolution" value="4.60 A"/>
    <property type="chains" value="V=2-144"/>
</dbReference>
<dbReference type="PDB" id="7DGS">
    <property type="method" value="EM"/>
    <property type="resolution" value="7.80 A"/>
    <property type="chains" value="V=2-144"/>
</dbReference>
<dbReference type="PDB" id="7DGZ">
    <property type="method" value="EM"/>
    <property type="resolution" value="3.80 A"/>
    <property type="chains" value="V=2-144"/>
</dbReference>
<dbReference type="PDB" id="7DH0">
    <property type="method" value="EM"/>
    <property type="resolution" value="4.20 A"/>
    <property type="chains" value="V=2-144"/>
</dbReference>
<dbReference type="PDB" id="7DKF">
    <property type="method" value="EM"/>
    <property type="resolution" value="8.30 A"/>
    <property type="chains" value="V2=2-144"/>
</dbReference>
<dbReference type="PDB" id="7QSD">
    <property type="method" value="EM"/>
    <property type="resolution" value="3.10 A"/>
    <property type="chains" value="Z=1-144"/>
</dbReference>
<dbReference type="PDB" id="7QSK">
    <property type="method" value="EM"/>
    <property type="resolution" value="2.84 A"/>
    <property type="chains" value="Z=1-144"/>
</dbReference>
<dbReference type="PDB" id="7QSL">
    <property type="method" value="EM"/>
    <property type="resolution" value="2.76 A"/>
    <property type="chains" value="Z=1-144"/>
</dbReference>
<dbReference type="PDB" id="7QSM">
    <property type="method" value="EM"/>
    <property type="resolution" value="2.30 A"/>
    <property type="chains" value="Z=1-144"/>
</dbReference>
<dbReference type="PDB" id="7QSN">
    <property type="method" value="EM"/>
    <property type="resolution" value="2.81 A"/>
    <property type="chains" value="Z=1-144"/>
</dbReference>
<dbReference type="PDB" id="7QSO">
    <property type="method" value="EM"/>
    <property type="resolution" value="3.02 A"/>
    <property type="chains" value="Z=1-144"/>
</dbReference>
<dbReference type="PDB" id="7R41">
    <property type="method" value="EM"/>
    <property type="resolution" value="2.30 A"/>
    <property type="chains" value="Z=1-144"/>
</dbReference>
<dbReference type="PDB" id="7R42">
    <property type="method" value="EM"/>
    <property type="resolution" value="2.30 A"/>
    <property type="chains" value="Z=1-144"/>
</dbReference>
<dbReference type="PDB" id="7R43">
    <property type="method" value="EM"/>
    <property type="resolution" value="2.40 A"/>
    <property type="chains" value="Z=1-144"/>
</dbReference>
<dbReference type="PDB" id="7R44">
    <property type="method" value="EM"/>
    <property type="resolution" value="2.40 A"/>
    <property type="chains" value="Z=1-144"/>
</dbReference>
<dbReference type="PDB" id="7R45">
    <property type="method" value="EM"/>
    <property type="resolution" value="2.40 A"/>
    <property type="chains" value="Z=1-144"/>
</dbReference>
<dbReference type="PDB" id="7R46">
    <property type="method" value="EM"/>
    <property type="resolution" value="2.40 A"/>
    <property type="chains" value="Z=1-144"/>
</dbReference>
<dbReference type="PDB" id="7R47">
    <property type="method" value="EM"/>
    <property type="resolution" value="2.30 A"/>
    <property type="chains" value="Z=1-144"/>
</dbReference>
<dbReference type="PDB" id="7R48">
    <property type="method" value="EM"/>
    <property type="resolution" value="2.30 A"/>
    <property type="chains" value="Z=1-144"/>
</dbReference>
<dbReference type="PDB" id="7R4C">
    <property type="method" value="EM"/>
    <property type="resolution" value="2.30 A"/>
    <property type="chains" value="Z=1-144"/>
</dbReference>
<dbReference type="PDB" id="7R4D">
    <property type="method" value="EM"/>
    <property type="resolution" value="2.30 A"/>
    <property type="chains" value="Z=1-144"/>
</dbReference>
<dbReference type="PDB" id="7R4F">
    <property type="method" value="EM"/>
    <property type="resolution" value="2.40 A"/>
    <property type="chains" value="Z=1-144"/>
</dbReference>
<dbReference type="PDB" id="7R4G">
    <property type="method" value="EM"/>
    <property type="resolution" value="2.50 A"/>
    <property type="chains" value="Z=1-144"/>
</dbReference>
<dbReference type="PDB" id="8Q0A">
    <property type="method" value="EM"/>
    <property type="resolution" value="3.10 A"/>
    <property type="chains" value="Z=1-144"/>
</dbReference>
<dbReference type="PDB" id="8Q0F">
    <property type="method" value="EM"/>
    <property type="resolution" value="3.10 A"/>
    <property type="chains" value="Z=1-144"/>
</dbReference>
<dbReference type="PDB" id="8Q0J">
    <property type="method" value="EM"/>
    <property type="resolution" value="3.80 A"/>
    <property type="chains" value="Z=1-144"/>
</dbReference>
<dbReference type="PDB" id="8Q0M">
    <property type="method" value="EM"/>
    <property type="resolution" value="3.10 A"/>
    <property type="chains" value="Z=1-144"/>
</dbReference>
<dbReference type="PDB" id="8Q0O">
    <property type="method" value="EM"/>
    <property type="resolution" value="3.10 A"/>
    <property type="chains" value="Z=1-144"/>
</dbReference>
<dbReference type="PDB" id="8Q0Q">
    <property type="method" value="EM"/>
    <property type="resolution" value="3.60 A"/>
    <property type="chains" value="Z=1-144"/>
</dbReference>
<dbReference type="PDB" id="8Q1P">
    <property type="method" value="EM"/>
    <property type="resolution" value="2.90 A"/>
    <property type="chains" value="Z=1-144"/>
</dbReference>
<dbReference type="PDB" id="8Q1U">
    <property type="method" value="EM"/>
    <property type="resolution" value="3.30 A"/>
    <property type="chains" value="Z=1-144"/>
</dbReference>
<dbReference type="PDB" id="8Q1Y">
    <property type="method" value="EM"/>
    <property type="resolution" value="2.60 A"/>
    <property type="chains" value="Z=1-144"/>
</dbReference>
<dbReference type="PDB" id="8Q25">
    <property type="method" value="EM"/>
    <property type="resolution" value="2.80 A"/>
    <property type="chains" value="Z=1-144"/>
</dbReference>
<dbReference type="PDB" id="8Q45">
    <property type="method" value="EM"/>
    <property type="resolution" value="2.70 A"/>
    <property type="chains" value="Z=1-144"/>
</dbReference>
<dbReference type="PDB" id="8Q46">
    <property type="method" value="EM"/>
    <property type="resolution" value="2.60 A"/>
    <property type="chains" value="Z=1-144"/>
</dbReference>
<dbReference type="PDB" id="8Q47">
    <property type="method" value="EM"/>
    <property type="resolution" value="2.90 A"/>
    <property type="chains" value="Z=1-144"/>
</dbReference>
<dbReference type="PDB" id="8Q48">
    <property type="method" value="EM"/>
    <property type="resolution" value="2.50 A"/>
    <property type="chains" value="Z=1-144"/>
</dbReference>
<dbReference type="PDB" id="8Q49">
    <property type="method" value="EM"/>
    <property type="resolution" value="2.60 A"/>
    <property type="chains" value="Z=1-144"/>
</dbReference>
<dbReference type="PDB" id="8Q4A">
    <property type="method" value="EM"/>
    <property type="resolution" value="2.60 A"/>
    <property type="chains" value="Z=1-144"/>
</dbReference>
<dbReference type="PDBsum" id="5LC5"/>
<dbReference type="PDBsum" id="5LDW"/>
<dbReference type="PDBsum" id="5LDX"/>
<dbReference type="PDBsum" id="5LNK"/>
<dbReference type="PDBsum" id="5O31"/>
<dbReference type="PDBsum" id="7DGQ"/>
<dbReference type="PDBsum" id="7DGR"/>
<dbReference type="PDBsum" id="7DGS"/>
<dbReference type="PDBsum" id="7DGZ"/>
<dbReference type="PDBsum" id="7DH0"/>
<dbReference type="PDBsum" id="7DKF"/>
<dbReference type="PDBsum" id="7QSD"/>
<dbReference type="PDBsum" id="7QSK"/>
<dbReference type="PDBsum" id="7QSL"/>
<dbReference type="PDBsum" id="7QSM"/>
<dbReference type="PDBsum" id="7QSN"/>
<dbReference type="PDBsum" id="7QSO"/>
<dbReference type="PDBsum" id="7R41"/>
<dbReference type="PDBsum" id="7R42"/>
<dbReference type="PDBsum" id="7R43"/>
<dbReference type="PDBsum" id="7R44"/>
<dbReference type="PDBsum" id="7R45"/>
<dbReference type="PDBsum" id="7R46"/>
<dbReference type="PDBsum" id="7R47"/>
<dbReference type="PDBsum" id="7R48"/>
<dbReference type="PDBsum" id="7R4C"/>
<dbReference type="PDBsum" id="7R4D"/>
<dbReference type="PDBsum" id="7R4F"/>
<dbReference type="PDBsum" id="7R4G"/>
<dbReference type="PDBsum" id="8Q0A"/>
<dbReference type="PDBsum" id="8Q0F"/>
<dbReference type="PDBsum" id="8Q0J"/>
<dbReference type="PDBsum" id="8Q0M"/>
<dbReference type="PDBsum" id="8Q0O"/>
<dbReference type="PDBsum" id="8Q0Q"/>
<dbReference type="PDBsum" id="8Q1P"/>
<dbReference type="PDBsum" id="8Q1U"/>
<dbReference type="PDBsum" id="8Q1Y"/>
<dbReference type="PDBsum" id="8Q25"/>
<dbReference type="PDBsum" id="8Q45"/>
<dbReference type="PDBsum" id="8Q46"/>
<dbReference type="PDBsum" id="8Q47"/>
<dbReference type="PDBsum" id="8Q48"/>
<dbReference type="PDBsum" id="8Q49"/>
<dbReference type="PDBsum" id="8Q4A"/>
<dbReference type="EMDB" id="EMD-14127"/>
<dbReference type="EMDB" id="EMD-14132"/>
<dbReference type="EMDB" id="EMD-14133"/>
<dbReference type="EMDB" id="EMD-14134"/>
<dbReference type="EMDB" id="EMD-14139"/>
<dbReference type="EMDB" id="EMD-14140"/>
<dbReference type="EMDB" id="EMD-14251"/>
<dbReference type="EMDB" id="EMD-14256"/>
<dbReference type="EMDB" id="EMD-14261"/>
<dbReference type="EMDB" id="EMD-14266"/>
<dbReference type="EMDB" id="EMD-14272"/>
<dbReference type="EMDB" id="EMD-14277"/>
<dbReference type="EMDB" id="EMD-14282"/>
<dbReference type="EMDB" id="EMD-14287"/>
<dbReference type="EMDB" id="EMD-14292"/>
<dbReference type="EMDB" id="EMD-14297"/>
<dbReference type="EMDB" id="EMD-14302"/>
<dbReference type="EMDB" id="EMD-14307"/>
<dbReference type="EMDB" id="EMD-18051"/>
<dbReference type="EMDB" id="EMD-18052"/>
<dbReference type="EMDB" id="EMD-18054"/>
<dbReference type="EMDB" id="EMD-18055"/>
<dbReference type="EMDB" id="EMD-18057"/>
<dbReference type="EMDB" id="EMD-18059"/>
<dbReference type="EMDB" id="EMD-18066"/>
<dbReference type="EMDB" id="EMD-18067"/>
<dbReference type="EMDB" id="EMD-18068"/>
<dbReference type="EMDB" id="EMD-18069"/>
<dbReference type="EMDB" id="EMD-18138"/>
<dbReference type="EMDB" id="EMD-18139"/>
<dbReference type="EMDB" id="EMD-18140"/>
<dbReference type="EMDB" id="EMD-18141"/>
<dbReference type="EMDB" id="EMD-18142"/>
<dbReference type="EMDB" id="EMD-18143"/>
<dbReference type="EMDB" id="EMD-30673"/>
<dbReference type="EMDB" id="EMD-30674"/>
<dbReference type="EMDB" id="EMD-30675"/>
<dbReference type="EMDB" id="EMD-30676"/>
<dbReference type="EMDB" id="EMD-30677"/>
<dbReference type="EMDB" id="EMD-30706"/>
<dbReference type="EMDB" id="EMD-3731"/>
<dbReference type="EMDB" id="EMD-4032"/>
<dbReference type="EMDB" id="EMD-4040"/>
<dbReference type="EMDB" id="EMD-4041"/>
<dbReference type="SMR" id="Q95KV7"/>
<dbReference type="CORUM" id="Q95KV7"/>
<dbReference type="DIP" id="DIP-38831N"/>
<dbReference type="FunCoup" id="Q95KV7">
    <property type="interactions" value="2645"/>
</dbReference>
<dbReference type="IntAct" id="Q95KV7">
    <property type="interactions" value="2"/>
</dbReference>
<dbReference type="STRING" id="9913.ENSBTAP00000010276"/>
<dbReference type="TCDB" id="3.D.1.6.1">
    <property type="family name" value="the h+ or na+-translocating nadh dehydrogenase (ndh) family"/>
</dbReference>
<dbReference type="GlyGen" id="Q95KV7">
    <property type="glycosylation" value="1 site, 1 O-linked glycan (1 site)"/>
</dbReference>
<dbReference type="iPTMnet" id="Q95KV7"/>
<dbReference type="PaxDb" id="9913-ENSBTAP00000010276"/>
<dbReference type="GeneID" id="338084"/>
<dbReference type="KEGG" id="bta:338084"/>
<dbReference type="CTD" id="51079"/>
<dbReference type="VEuPathDB" id="HostDB:ENSBTAG00000007812"/>
<dbReference type="eggNOG" id="KOG3300">
    <property type="taxonomic scope" value="Eukaryota"/>
</dbReference>
<dbReference type="HOGENOM" id="CLU_119720_0_0_1"/>
<dbReference type="InParanoid" id="Q95KV7"/>
<dbReference type="OMA" id="YGIREQH"/>
<dbReference type="OrthoDB" id="3308at2759"/>
<dbReference type="TreeFam" id="TF315182"/>
<dbReference type="Reactome" id="R-BTA-611105">
    <property type="pathway name" value="Respiratory electron transport"/>
</dbReference>
<dbReference type="Reactome" id="R-BTA-6799198">
    <property type="pathway name" value="Complex I biogenesis"/>
</dbReference>
<dbReference type="Reactome" id="R-BTA-9837999">
    <property type="pathway name" value="Mitochondrial protein degradation"/>
</dbReference>
<dbReference type="Proteomes" id="UP000009136">
    <property type="component" value="Chromosome 7"/>
</dbReference>
<dbReference type="Bgee" id="ENSBTAG00000007812">
    <property type="expression patterns" value="Expressed in laryngeal cartilage and 105 other cell types or tissues"/>
</dbReference>
<dbReference type="GO" id="GO:0005737">
    <property type="term" value="C:cytoplasm"/>
    <property type="evidence" value="ECO:0000250"/>
    <property type="project" value="UniProtKB"/>
</dbReference>
<dbReference type="GO" id="GO:0005743">
    <property type="term" value="C:mitochondrial inner membrane"/>
    <property type="evidence" value="ECO:0007669"/>
    <property type="project" value="UniProtKB-SubCell"/>
</dbReference>
<dbReference type="GO" id="GO:0005739">
    <property type="term" value="C:mitochondrion"/>
    <property type="evidence" value="ECO:0000314"/>
    <property type="project" value="UniProtKB"/>
</dbReference>
<dbReference type="GO" id="GO:0005654">
    <property type="term" value="C:nucleoplasm"/>
    <property type="evidence" value="ECO:0000250"/>
    <property type="project" value="UniProtKB"/>
</dbReference>
<dbReference type="GO" id="GO:0045271">
    <property type="term" value="C:respiratory chain complex I"/>
    <property type="evidence" value="ECO:0000314"/>
    <property type="project" value="UniProtKB"/>
</dbReference>
<dbReference type="GO" id="GO:0008137">
    <property type="term" value="F:NADH dehydrogenase (ubiquinone) activity"/>
    <property type="evidence" value="ECO:0000314"/>
    <property type="project" value="UniProtKB"/>
</dbReference>
<dbReference type="GO" id="GO:0006915">
    <property type="term" value="P:apoptotic process"/>
    <property type="evidence" value="ECO:0007669"/>
    <property type="project" value="UniProtKB-KW"/>
</dbReference>
<dbReference type="GO" id="GO:0045892">
    <property type="term" value="P:negative regulation of DNA-templated transcription"/>
    <property type="evidence" value="ECO:0000250"/>
    <property type="project" value="UniProtKB"/>
</dbReference>
<dbReference type="InterPro" id="IPR009346">
    <property type="entry name" value="GRIM-19"/>
</dbReference>
<dbReference type="PANTHER" id="PTHR12966:SF0">
    <property type="entry name" value="NADH DEHYDROGENASE [UBIQUINONE] 1 ALPHA SUBCOMPLEX SUBUNIT 13"/>
    <property type="match status" value="1"/>
</dbReference>
<dbReference type="PANTHER" id="PTHR12966">
    <property type="entry name" value="NADH DEHYDROGENASE UBIQUINONE 1 ALPHA SUBCOMPLEX SUBUNIT 13"/>
    <property type="match status" value="1"/>
</dbReference>
<dbReference type="Pfam" id="PF06212">
    <property type="entry name" value="GRIM-19"/>
    <property type="match status" value="1"/>
</dbReference>
<proteinExistence type="evidence at protein level"/>
<keyword id="KW-0002">3D-structure</keyword>
<keyword id="KW-0007">Acetylation</keyword>
<keyword id="KW-0053">Apoptosis</keyword>
<keyword id="KW-0903">Direct protein sequencing</keyword>
<keyword id="KW-0249">Electron transport</keyword>
<keyword id="KW-0472">Membrane</keyword>
<keyword id="KW-0496">Mitochondrion</keyword>
<keyword id="KW-0999">Mitochondrion inner membrane</keyword>
<keyword id="KW-0539">Nucleus</keyword>
<keyword id="KW-1185">Reference proteome</keyword>
<keyword id="KW-0679">Respiratory chain</keyword>
<keyword id="KW-0812">Transmembrane</keyword>
<keyword id="KW-1133">Transmembrane helix</keyword>
<keyword id="KW-0813">Transport</keyword>
<protein>
    <recommendedName>
        <fullName>NADH dehydrogenase [ubiquinone] 1 alpha subcomplex subunit 13</fullName>
    </recommendedName>
    <alternativeName>
        <fullName>Cell death regulatory protein GRIM-19</fullName>
    </alternativeName>
    <alternativeName>
        <fullName>Complex I-B16.6</fullName>
        <shortName>CI-B16.6</shortName>
    </alternativeName>
    <alternativeName>
        <fullName>Gene associated with retinoic-interferon-induced mortality 19 protein</fullName>
        <shortName>GRIM-19</shortName>
    </alternativeName>
    <alternativeName>
        <fullName>NADH-ubiquinone oxidoreductase B16.6 subunit</fullName>
    </alternativeName>
</protein>
<accession>Q95KV7</accession>
<accession>Q3T0G4</accession>
<gene>
    <name type="primary">NDUFA13</name>
    <name type="synonym">GRIM19</name>
</gene>
<organism>
    <name type="scientific">Bos taurus</name>
    <name type="common">Bovine</name>
    <dbReference type="NCBI Taxonomy" id="9913"/>
    <lineage>
        <taxon>Eukaryota</taxon>
        <taxon>Metazoa</taxon>
        <taxon>Chordata</taxon>
        <taxon>Craniata</taxon>
        <taxon>Vertebrata</taxon>
        <taxon>Euteleostomi</taxon>
        <taxon>Mammalia</taxon>
        <taxon>Eutheria</taxon>
        <taxon>Laurasiatheria</taxon>
        <taxon>Artiodactyla</taxon>
        <taxon>Ruminantia</taxon>
        <taxon>Pecora</taxon>
        <taxon>Bovidae</taxon>
        <taxon>Bovinae</taxon>
        <taxon>Bos</taxon>
    </lineage>
</organism>
<comment type="function">
    <text evidence="1">Accessory subunit of the mitochondrial membrane respiratory chain NADH dehydrogenase (Complex I), that is believed not to be involved in catalysis. Complex I functions in the transfer of electrons from NADH to the respiratory chain. The immediate electron acceptor for the enzyme is believed to be ubiquinone. Involved in the interferon/all-trans-retinoic acid (IFN/RA) induced cell death. This apoptotic activity is inhibited by interaction with viral IRF1. Prevents the transactivation of STAT3 target genes. May play a role in CARD15-mediated innate mucosal responses and serve to regulate intestinal epithelial cell responses to microbes.</text>
</comment>
<comment type="subunit">
    <text evidence="1 4">Complex I is composed of 45 different subunits (PubMed:18721790). Interacts with CARD15, but not with CARD4. Interacts with STAT3, but not with STAT1, STAT2 and STAT5A. Interacts with OLFM4.</text>
</comment>
<comment type="subcellular location">
    <subcellularLocation>
        <location evidence="6">Mitochondrion inner membrane</location>
        <topology evidence="2">Single-pass membrane protein</topology>
        <orientation evidence="5">Matrix side</orientation>
    </subcellularLocation>
    <subcellularLocation>
        <location evidence="1">Nucleus</location>
    </subcellularLocation>
    <text evidence="1">Localizes mainly in the mitochondrion. May be translocated into the nucleus upon IFN/RA treatment.</text>
</comment>
<comment type="mass spectrometry"/>
<comment type="similarity">
    <text evidence="5">Belongs to the complex I NDUFA13 subunit family.</text>
</comment>
<sequence>MAASKVKQDMPPVGGYGPIDYKRNLPRRGLSGYSMFAVGIGALLFGYWSMMKWNRERRRLQIEDFEARIALMPLLQAEKDRRVLQMLRENLEEEATVMKDVPGWKVGESVFHTTRWVTPMMGELYGLRASEEVLSATYGFIWYT</sequence>
<evidence type="ECO:0000250" key="1">
    <source>
        <dbReference type="UniProtKB" id="Q9P0J0"/>
    </source>
</evidence>
<evidence type="ECO:0000255" key="2"/>
<evidence type="ECO:0000269" key="3">
    <source>
    </source>
</evidence>
<evidence type="ECO:0000269" key="4">
    <source>
    </source>
</evidence>
<evidence type="ECO:0000305" key="5"/>
<evidence type="ECO:0000305" key="6">
    <source>
    </source>
</evidence>
<evidence type="ECO:0007829" key="7">
    <source>
        <dbReference type="PDB" id="7QSM"/>
    </source>
</evidence>
<feature type="initiator methionine" description="Removed" evidence="3">
    <location>
        <position position="1"/>
    </location>
</feature>
<feature type="chain" id="PRO_0000118803" description="NADH dehydrogenase [ubiquinone] 1 alpha subcomplex subunit 13">
    <location>
        <begin position="2"/>
        <end position="144"/>
    </location>
</feature>
<feature type="transmembrane region" description="Helical" evidence="2">
    <location>
        <begin position="30"/>
        <end position="51"/>
    </location>
</feature>
<feature type="modified residue" description="N-acetylalanine" evidence="3">
    <location>
        <position position="2"/>
    </location>
</feature>
<feature type="helix" evidence="7">
    <location>
        <begin position="32"/>
        <end position="97"/>
    </location>
</feature>
<feature type="turn" evidence="7">
    <location>
        <begin position="98"/>
        <end position="100"/>
    </location>
</feature>
<feature type="strand" evidence="7">
    <location>
        <begin position="110"/>
        <end position="113"/>
    </location>
</feature>
<feature type="helix" evidence="7">
    <location>
        <begin position="121"/>
        <end position="125"/>
    </location>
</feature>
<feature type="strand" evidence="7">
    <location>
        <begin position="126"/>
        <end position="128"/>
    </location>
</feature>
<feature type="helix" evidence="7">
    <location>
        <begin position="130"/>
        <end position="138"/>
    </location>
</feature>
<feature type="turn" evidence="7">
    <location>
        <begin position="139"/>
        <end position="142"/>
    </location>
</feature>
<name>NDUAD_BOVIN</name>